<evidence type="ECO:0000255" key="1">
    <source>
        <dbReference type="PROSITE-ProRule" id="PRU00477"/>
    </source>
</evidence>
<evidence type="ECO:0000256" key="2">
    <source>
        <dbReference type="SAM" id="MobiDB-lite"/>
    </source>
</evidence>
<evidence type="ECO:0007829" key="3">
    <source>
        <dbReference type="PDB" id="1YWM"/>
    </source>
</evidence>
<accession>Q02192</accession>
<accession>Q3K2V1</accession>
<comment type="function">
    <text>May play a role in both virulence and immunity.</text>
</comment>
<comment type="subcellular location">
    <subcellularLocation>
        <location evidence="1">Secreted</location>
        <location evidence="1">Cell wall</location>
        <topology evidence="1">Peptidoglycan-anchor</topology>
    </subcellularLocation>
</comment>
<comment type="miscellaneous">
    <text>Identical repeating units define protective epitopes and may play a role in generating phenotypic and genotypic diversity.</text>
</comment>
<feature type="signal peptide">
    <location>
        <begin position="1"/>
        <end position="41"/>
    </location>
</feature>
<feature type="chain" id="PRO_0000005597" description="C protein alpha-antigen">
    <location>
        <begin position="42"/>
        <end position="990"/>
    </location>
</feature>
<feature type="propeptide" id="PRO_0000005598" description="Removed by sortase" evidence="1">
    <location>
        <begin position="991"/>
        <end position="1020"/>
    </location>
</feature>
<feature type="region of interest" description="9 X 82 AA tandem repeats">
    <location>
        <begin position="227"/>
        <end position="964"/>
    </location>
</feature>
<feature type="region of interest" description="Disordered" evidence="2">
    <location>
        <begin position="261"/>
        <end position="281"/>
    </location>
</feature>
<feature type="region of interest" description="Disordered" evidence="2">
    <location>
        <begin position="306"/>
        <end position="330"/>
    </location>
</feature>
<feature type="region of interest" description="Disordered" evidence="2">
    <location>
        <begin position="342"/>
        <end position="363"/>
    </location>
</feature>
<feature type="region of interest" description="Disordered" evidence="2">
    <location>
        <begin position="388"/>
        <end position="445"/>
    </location>
</feature>
<feature type="region of interest" description="Disordered" evidence="2">
    <location>
        <begin position="470"/>
        <end position="494"/>
    </location>
</feature>
<feature type="region of interest" description="Disordered" evidence="2">
    <location>
        <begin position="506"/>
        <end position="527"/>
    </location>
</feature>
<feature type="region of interest" description="Disordered" evidence="2">
    <location>
        <begin position="552"/>
        <end position="576"/>
    </location>
</feature>
<feature type="region of interest" description="Disordered" evidence="2">
    <location>
        <begin position="588"/>
        <end position="610"/>
    </location>
</feature>
<feature type="region of interest" description="Disordered" evidence="2">
    <location>
        <begin position="634"/>
        <end position="658"/>
    </location>
</feature>
<feature type="region of interest" description="Disordered" evidence="2">
    <location>
        <begin position="670"/>
        <end position="692"/>
    </location>
</feature>
<feature type="region of interest" description="Disordered" evidence="2">
    <location>
        <begin position="716"/>
        <end position="740"/>
    </location>
</feature>
<feature type="region of interest" description="Disordered" evidence="2">
    <location>
        <begin position="752"/>
        <end position="774"/>
    </location>
</feature>
<feature type="region of interest" description="Disordered" evidence="2">
    <location>
        <begin position="798"/>
        <end position="822"/>
    </location>
</feature>
<feature type="region of interest" description="Disordered" evidence="2">
    <location>
        <begin position="834"/>
        <end position="856"/>
    </location>
</feature>
<feature type="region of interest" description="Disordered" evidence="2">
    <location>
        <begin position="880"/>
        <end position="904"/>
    </location>
</feature>
<feature type="region of interest" description="Disordered" evidence="2">
    <location>
        <begin position="962"/>
        <end position="989"/>
    </location>
</feature>
<feature type="short sequence motif" description="LPXTG sorting signal" evidence="1">
    <location>
        <begin position="987"/>
        <end position="991"/>
    </location>
</feature>
<feature type="compositionally biased region" description="Basic and acidic residues" evidence="2">
    <location>
        <begin position="272"/>
        <end position="281"/>
    </location>
</feature>
<feature type="compositionally biased region" description="Polar residues" evidence="2">
    <location>
        <begin position="320"/>
        <end position="329"/>
    </location>
</feature>
<feature type="compositionally biased region" description="Basic and acidic residues" evidence="2">
    <location>
        <begin position="354"/>
        <end position="363"/>
    </location>
</feature>
<feature type="compositionally biased region" description="Polar residues" evidence="2">
    <location>
        <begin position="402"/>
        <end position="411"/>
    </location>
</feature>
<feature type="compositionally biased region" description="Basic and acidic residues" evidence="2">
    <location>
        <begin position="436"/>
        <end position="445"/>
    </location>
</feature>
<feature type="compositionally biased region" description="Polar residues" evidence="2">
    <location>
        <begin position="484"/>
        <end position="493"/>
    </location>
</feature>
<feature type="compositionally biased region" description="Basic and acidic residues" evidence="2">
    <location>
        <begin position="518"/>
        <end position="527"/>
    </location>
</feature>
<feature type="compositionally biased region" description="Polar residues" evidence="2">
    <location>
        <begin position="566"/>
        <end position="575"/>
    </location>
</feature>
<feature type="compositionally biased region" description="Basic and acidic residues" evidence="2">
    <location>
        <begin position="600"/>
        <end position="610"/>
    </location>
</feature>
<feature type="compositionally biased region" description="Polar residues" evidence="2">
    <location>
        <begin position="648"/>
        <end position="657"/>
    </location>
</feature>
<feature type="compositionally biased region" description="Basic and acidic residues" evidence="2">
    <location>
        <begin position="682"/>
        <end position="692"/>
    </location>
</feature>
<feature type="compositionally biased region" description="Polar residues" evidence="2">
    <location>
        <begin position="730"/>
        <end position="739"/>
    </location>
</feature>
<feature type="compositionally biased region" description="Basic and acidic residues" evidence="2">
    <location>
        <begin position="764"/>
        <end position="774"/>
    </location>
</feature>
<feature type="compositionally biased region" description="Polar residues" evidence="2">
    <location>
        <begin position="812"/>
        <end position="821"/>
    </location>
</feature>
<feature type="compositionally biased region" description="Basic and acidic residues" evidence="2">
    <location>
        <begin position="846"/>
        <end position="856"/>
    </location>
</feature>
<feature type="compositionally biased region" description="Polar residues" evidence="2">
    <location>
        <begin position="894"/>
        <end position="903"/>
    </location>
</feature>
<feature type="modified residue" description="Pentaglycyl murein peptidoglycan amidated threonine" evidence="1">
    <location>
        <position position="990"/>
    </location>
</feature>
<feature type="strand" evidence="3">
    <location>
        <begin position="63"/>
        <end position="66"/>
    </location>
</feature>
<feature type="turn" evidence="3">
    <location>
        <begin position="71"/>
        <end position="73"/>
    </location>
</feature>
<feature type="strand" evidence="3">
    <location>
        <begin position="78"/>
        <end position="82"/>
    </location>
</feature>
<feature type="helix" evidence="3">
    <location>
        <begin position="83"/>
        <end position="87"/>
    </location>
</feature>
<feature type="helix" evidence="3">
    <location>
        <begin position="93"/>
        <end position="96"/>
    </location>
</feature>
<feature type="strand" evidence="3">
    <location>
        <begin position="97"/>
        <end position="99"/>
    </location>
</feature>
<feature type="strand" evidence="3">
    <location>
        <begin position="104"/>
        <end position="111"/>
    </location>
</feature>
<feature type="strand" evidence="3">
    <location>
        <begin position="114"/>
        <end position="118"/>
    </location>
</feature>
<feature type="helix" evidence="3">
    <location>
        <begin position="119"/>
        <end position="121"/>
    </location>
</feature>
<feature type="strand" evidence="3">
    <location>
        <begin position="126"/>
        <end position="135"/>
    </location>
</feature>
<feature type="strand" evidence="3">
    <location>
        <begin position="139"/>
        <end position="141"/>
    </location>
</feature>
<feature type="strand" evidence="3">
    <location>
        <begin position="147"/>
        <end position="149"/>
    </location>
</feature>
<feature type="strand" evidence="3">
    <location>
        <begin position="151"/>
        <end position="159"/>
    </location>
</feature>
<feature type="helix" evidence="3">
    <location>
        <begin position="162"/>
        <end position="175"/>
    </location>
</feature>
<feature type="helix" evidence="3">
    <location>
        <begin position="182"/>
        <end position="201"/>
    </location>
</feature>
<feature type="helix" evidence="3">
    <location>
        <begin position="206"/>
        <end position="220"/>
    </location>
</feature>
<gene>
    <name type="primary">bca</name>
    <name type="ordered locus">SAK_0517</name>
</gene>
<protein>
    <recommendedName>
        <fullName>C protein alpha-antigen</fullName>
    </recommendedName>
</protein>
<proteinExistence type="evidence at protein level"/>
<keyword id="KW-0002">3D-structure</keyword>
<keyword id="KW-0134">Cell wall</keyword>
<keyword id="KW-0572">Peptidoglycan-anchor</keyword>
<keyword id="KW-0677">Repeat</keyword>
<keyword id="KW-0964">Secreted</keyword>
<keyword id="KW-0732">Signal</keyword>
<keyword id="KW-0843">Virulence</keyword>
<sequence length="1020" mass="108705">MFRRSKNNSYDTSQTKQRFSIKKFKFGAASVLIGLSFLGGVTQGNLNIFEESIVAASTIPGSAATLNTSITKNIQNGNAYIDLYDVKLGKIDPLQLIVLEQGFTAKYVFRQGTKYYGDVSQLQSTGRASLTYNIFGEDGLPHVKTDGQIDIVSVALTIYDSTTLRDKIEEVRTNANDPKWTEESRTEVLTGLDTIKTDIDNNPKTQTDIDSKIVEVNELEKLLVLSVPDKDKYDPTGGETTVPQGTPVSDKEITDLVKIPDGSKGVPTVVGDRPDTNVPGDHKVTVEVTYPDGTKDTVEVTVHVTPKPVPDKDKYDPTGGETTVPQGTPVSDKEITDLVKIPDGSKGVPTVVGDRPDTNVPGDHKVTVEVTYPDGTKDTVEVTVHVTPKPVPDKDKYDPTGGETTVPQGTPVSDKEITDLVKIPDGSKGVPTVVGDRPDTNVPGDHKVTVEVTYPDGTKDTVEVTVHVTPKPVPDKDKYDPTGGETTVPQGTPVSDKEITDLVKIPDGSKGVPTVVGDRPDTNVPGDHKVTVEVTYPDGTKDTVEVTVHVTPKPVPDKDKYDPTGGETTVPQGTPVSDKEITDLVKIPDGSKGVPTVVGDRPDTNVPGDHKVTVEVTYPDGTKDTVEVTVHVTPKPVPDKDKYDPTGGETTVPQGTPVSDKEITDLVKIPDGSKGVPTVVGDRPDTNVPGDHKVTVEVTYPDGTKDTVEVTVHVTPKPVPDKDKYDPTGGETTVPQGTPVSDKEITDLVKIPDGSKGVPTVVGDRPDTNVPGDHKVTVEVTYPDGTKDTVEVTVHVTPKPVPDKDKYDPTGGETTVPQGTPVSDKEITDLVKIPDGSKGVPTVVGDRPDTNVPGDHKVTVEVTYPDGTKDTVEVTVHVTPKPVPDKDKYDPTGGETTVPQGTPVSDKEITDLVKIPDGSKGVPTVVGDRPDTNVPGDHKVTVEVTYPDGTKDTVEVTVHVTPKPVPDKDKYDPTGKAQQVNGKGNKLPATGENATPFFNVAALTIISSVGLLSVSKKKED</sequence>
<name>BCA_STRA1</name>
<reference key="1">
    <citation type="journal article" date="1992" name="Proc. Natl. Acad. Sci. U.S.A.">
        <title>Large, identical, tandem repeating units in the C protein alpha antigen gene, bca, of group B streptococci.</title>
        <authorList>
            <person name="Michel J.L."/>
            <person name="Madoff L.C."/>
            <person name="Olson K."/>
            <person name="Kling D.E."/>
            <person name="Kasper D.L."/>
            <person name="Ausubel F.M."/>
        </authorList>
    </citation>
    <scope>NUCLEOTIDE SEQUENCE [GENOMIC DNA]</scope>
    <source>
        <strain>ATCC 27591 / A909 / CDC SS700</strain>
    </source>
</reference>
<reference key="2">
    <citation type="journal article" date="2005" name="Proc. Natl. Acad. Sci. U.S.A.">
        <title>Genome analysis of multiple pathogenic isolates of Streptococcus agalactiae: implications for the microbial 'pan-genome'.</title>
        <authorList>
            <person name="Tettelin H."/>
            <person name="Masignani V."/>
            <person name="Cieslewicz M.J."/>
            <person name="Donati C."/>
            <person name="Medini D."/>
            <person name="Ward N.L."/>
            <person name="Angiuoli S.V."/>
            <person name="Crabtree J."/>
            <person name="Jones A.L."/>
            <person name="Durkin A.S."/>
            <person name="DeBoy R.T."/>
            <person name="Davidsen T.M."/>
            <person name="Mora M."/>
            <person name="Scarselli M."/>
            <person name="Margarit y Ros I."/>
            <person name="Peterson J.D."/>
            <person name="Hauser C.R."/>
            <person name="Sundaram J.P."/>
            <person name="Nelson W.C."/>
            <person name="Madupu R."/>
            <person name="Brinkac L.M."/>
            <person name="Dodson R.J."/>
            <person name="Rosovitz M.J."/>
            <person name="Sullivan S.A."/>
            <person name="Daugherty S.C."/>
            <person name="Haft D.H."/>
            <person name="Selengut J."/>
            <person name="Gwinn M.L."/>
            <person name="Zhou L."/>
            <person name="Zafar N."/>
            <person name="Khouri H."/>
            <person name="Radune D."/>
            <person name="Dimitrov G."/>
            <person name="Watkins K."/>
            <person name="O'Connor K.J."/>
            <person name="Smith S."/>
            <person name="Utterback T.R."/>
            <person name="White O."/>
            <person name="Rubens C.E."/>
            <person name="Grandi G."/>
            <person name="Madoff L.C."/>
            <person name="Kasper D.L."/>
            <person name="Telford J.L."/>
            <person name="Wessels M.R."/>
            <person name="Rappuoli R."/>
            <person name="Fraser C.M."/>
        </authorList>
    </citation>
    <scope>NUCLEOTIDE SEQUENCE [LARGE SCALE GENOMIC DNA]</scope>
    <source>
        <strain>ATCC 27591 / A909 / CDC SS700</strain>
    </source>
</reference>
<dbReference type="EMBL" id="M97256">
    <property type="protein sequence ID" value="AAA26848.1"/>
    <property type="molecule type" value="Genomic_DNA"/>
</dbReference>
<dbReference type="EMBL" id="CP000114">
    <property type="protein sequence ID" value="ABA45154.1"/>
    <property type="molecule type" value="Genomic_DNA"/>
</dbReference>
<dbReference type="RefSeq" id="WP_000489955.1">
    <property type="nucleotide sequence ID" value="NC_007432.1"/>
</dbReference>
<dbReference type="PDB" id="1YWM">
    <property type="method" value="X-ray"/>
    <property type="resolution" value="1.86 A"/>
    <property type="chains" value="A=52-225"/>
</dbReference>
<dbReference type="PDB" id="2O0I">
    <property type="method" value="X-ray"/>
    <property type="resolution" value="3.10 A"/>
    <property type="chains" value="1=57-225"/>
</dbReference>
<dbReference type="PDBsum" id="1YWM"/>
<dbReference type="PDBsum" id="2O0I"/>
<dbReference type="SMR" id="Q02192"/>
<dbReference type="DrugBank" id="DB04447">
    <property type="generic name" value="1,4-Dithiothreitol"/>
</dbReference>
<dbReference type="KEGG" id="sak:SAK_0517"/>
<dbReference type="HOGENOM" id="CLU_311202_0_0_9"/>
<dbReference type="EvolutionaryTrace" id="Q02192"/>
<dbReference type="GO" id="GO:0005576">
    <property type="term" value="C:extracellular region"/>
    <property type="evidence" value="ECO:0007669"/>
    <property type="project" value="UniProtKB-KW"/>
</dbReference>
<dbReference type="Gene3D" id="1.20.1270.150">
    <property type="entry name" value="Surface Active Protein"/>
    <property type="match status" value="1"/>
</dbReference>
<dbReference type="Gene3D" id="2.60.500.10">
    <property type="entry name" value="Surface Active Protein domain"/>
    <property type="match status" value="1"/>
</dbReference>
<dbReference type="InterPro" id="IPR038335">
    <property type="entry name" value="ACP_C_sf"/>
</dbReference>
<dbReference type="InterPro" id="IPR038544">
    <property type="entry name" value="ACP_N_sf"/>
</dbReference>
<dbReference type="InterPro" id="IPR035327">
    <property type="entry name" value="AlphaC_C"/>
</dbReference>
<dbReference type="InterPro" id="IPR014933">
    <property type="entry name" value="AlphaC_N"/>
</dbReference>
<dbReference type="InterPro" id="IPR019931">
    <property type="entry name" value="LPXTG_anchor"/>
</dbReference>
<dbReference type="InterPro" id="IPR019950">
    <property type="entry name" value="M_anchor"/>
</dbReference>
<dbReference type="InterPro" id="IPR012706">
    <property type="entry name" value="Rib_alpha_Esp_rpt"/>
</dbReference>
<dbReference type="InterPro" id="IPR005877">
    <property type="entry name" value="YSIRK_signal_dom"/>
</dbReference>
<dbReference type="NCBIfam" id="NF035941">
    <property type="entry name" value="GBS_alph_likeN"/>
    <property type="match status" value="1"/>
</dbReference>
<dbReference type="NCBIfam" id="TIGR01167">
    <property type="entry name" value="LPXTG_anchor"/>
    <property type="match status" value="1"/>
</dbReference>
<dbReference type="NCBIfam" id="TIGR02331">
    <property type="entry name" value="rib_alpha"/>
    <property type="match status" value="9"/>
</dbReference>
<dbReference type="NCBIfam" id="TIGR01168">
    <property type="entry name" value="YSIRK_signal"/>
    <property type="match status" value="1"/>
</dbReference>
<dbReference type="Pfam" id="PF08829">
    <property type="entry name" value="AlphaC_N"/>
    <property type="match status" value="1"/>
</dbReference>
<dbReference type="Pfam" id="PF17480">
    <property type="entry name" value="AlphaC_N2"/>
    <property type="match status" value="1"/>
</dbReference>
<dbReference type="Pfam" id="PF00746">
    <property type="entry name" value="Gram_pos_anchor"/>
    <property type="match status" value="1"/>
</dbReference>
<dbReference type="Pfam" id="PF08428">
    <property type="entry name" value="Rib"/>
    <property type="match status" value="9"/>
</dbReference>
<dbReference type="Pfam" id="PF04650">
    <property type="entry name" value="YSIRK_signal"/>
    <property type="match status" value="1"/>
</dbReference>
<dbReference type="PRINTS" id="PR00015">
    <property type="entry name" value="GPOSANCHOR"/>
</dbReference>
<dbReference type="PROSITE" id="PS50847">
    <property type="entry name" value="GRAM_POS_ANCHORING"/>
    <property type="match status" value="1"/>
</dbReference>
<organism>
    <name type="scientific">Streptococcus agalactiae serotype Ia (strain ATCC 27591 / A909 / CDC SS700)</name>
    <dbReference type="NCBI Taxonomy" id="205921"/>
    <lineage>
        <taxon>Bacteria</taxon>
        <taxon>Bacillati</taxon>
        <taxon>Bacillota</taxon>
        <taxon>Bacilli</taxon>
        <taxon>Lactobacillales</taxon>
        <taxon>Streptococcaceae</taxon>
        <taxon>Streptococcus</taxon>
    </lineage>
</organism>